<gene>
    <name evidence="1" type="primary">aroC</name>
    <name type="ordered locus">BL0878</name>
</gene>
<protein>
    <recommendedName>
        <fullName evidence="1">Chorismate synthase</fullName>
        <shortName evidence="1">CS</shortName>
        <ecNumber evidence="1">4.2.3.5</ecNumber>
    </recommendedName>
    <alternativeName>
        <fullName evidence="1">5-enolpyruvylshikimate-3-phosphate phospholyase</fullName>
    </alternativeName>
</protein>
<feature type="chain" id="PRO_0000140556" description="Chorismate synthase">
    <location>
        <begin position="1"/>
        <end position="395"/>
    </location>
</feature>
<feature type="region of interest" description="Disordered" evidence="2">
    <location>
        <begin position="99"/>
        <end position="120"/>
    </location>
</feature>
<feature type="binding site" evidence="1">
    <location>
        <position position="40"/>
    </location>
    <ligand>
        <name>NADP(+)</name>
        <dbReference type="ChEBI" id="CHEBI:58349"/>
    </ligand>
</feature>
<feature type="binding site" evidence="1">
    <location>
        <position position="46"/>
    </location>
    <ligand>
        <name>NADP(+)</name>
        <dbReference type="ChEBI" id="CHEBI:58349"/>
    </ligand>
</feature>
<feature type="binding site" evidence="1">
    <location>
        <begin position="134"/>
        <end position="136"/>
    </location>
    <ligand>
        <name>FMN</name>
        <dbReference type="ChEBI" id="CHEBI:58210"/>
    </ligand>
</feature>
<feature type="binding site" evidence="1">
    <location>
        <begin position="256"/>
        <end position="257"/>
    </location>
    <ligand>
        <name>FMN</name>
        <dbReference type="ChEBI" id="CHEBI:58210"/>
    </ligand>
</feature>
<feature type="binding site" evidence="1">
    <location>
        <position position="301"/>
    </location>
    <ligand>
        <name>FMN</name>
        <dbReference type="ChEBI" id="CHEBI:58210"/>
    </ligand>
</feature>
<feature type="binding site" evidence="1">
    <location>
        <begin position="316"/>
        <end position="320"/>
    </location>
    <ligand>
        <name>FMN</name>
        <dbReference type="ChEBI" id="CHEBI:58210"/>
    </ligand>
</feature>
<feature type="binding site" evidence="1">
    <location>
        <position position="342"/>
    </location>
    <ligand>
        <name>FMN</name>
        <dbReference type="ChEBI" id="CHEBI:58210"/>
    </ligand>
</feature>
<name>AROC_BIFLO</name>
<sequence length="395" mass="42363">MLRWQTAGESHGEALVAMIEGLPAGVRISTDDIVSALARRRLGYGRGARMKFEQDKVRLLTGVRHGLTLGSPVAIEIANTEWPKWTEVMSADALDHDLPREGRNAPLSRPRPGHADLTGMRKYGFDDARPVLERSSARETASRVALGEVAKQFLDQAFGIRTVAHVVALGGVQTNPDLPLPTPDDLEALDASPVRTLDKEAEARIIERINEAKKASDTLGGVIEVLAYGVPAGIGTYVESDRRLDAALASAIMGIQAFKGVEIGDGFLEASRPGSQAHDEIVVNADGRIDRLSNRAGGIEGGMSNGQVIRVRGAMKPIPSIPKALRTVDVLTGESAQAINQRSDSTAVPAASVVAEAMVRLTLAKYALDKFGGDSVAETRRNLESYLASWPEHMR</sequence>
<accession>Q8G5X3</accession>
<proteinExistence type="inferred from homology"/>
<evidence type="ECO:0000255" key="1">
    <source>
        <dbReference type="HAMAP-Rule" id="MF_00300"/>
    </source>
</evidence>
<evidence type="ECO:0000256" key="2">
    <source>
        <dbReference type="SAM" id="MobiDB-lite"/>
    </source>
</evidence>
<keyword id="KW-0028">Amino-acid biosynthesis</keyword>
<keyword id="KW-0057">Aromatic amino acid biosynthesis</keyword>
<keyword id="KW-0274">FAD</keyword>
<keyword id="KW-0285">Flavoprotein</keyword>
<keyword id="KW-0288">FMN</keyword>
<keyword id="KW-0456">Lyase</keyword>
<keyword id="KW-0521">NADP</keyword>
<keyword id="KW-1185">Reference proteome</keyword>
<dbReference type="EC" id="4.2.3.5" evidence="1"/>
<dbReference type="EMBL" id="AE014295">
    <property type="protein sequence ID" value="AAN24691.1"/>
    <property type="molecule type" value="Genomic_DNA"/>
</dbReference>
<dbReference type="RefSeq" id="NP_696055.1">
    <property type="nucleotide sequence ID" value="NC_004307.2"/>
</dbReference>
<dbReference type="RefSeq" id="WP_007052139.1">
    <property type="nucleotide sequence ID" value="NC_004307.2"/>
</dbReference>
<dbReference type="SMR" id="Q8G5X3"/>
<dbReference type="STRING" id="206672.BL0878"/>
<dbReference type="EnsemblBacteria" id="AAN24691">
    <property type="protein sequence ID" value="AAN24691"/>
    <property type="gene ID" value="BL0878"/>
</dbReference>
<dbReference type="GeneID" id="69577981"/>
<dbReference type="KEGG" id="blo:BL0878"/>
<dbReference type="PATRIC" id="fig|206672.9.peg.574"/>
<dbReference type="HOGENOM" id="CLU_034547_2_0_11"/>
<dbReference type="OrthoDB" id="9771806at2"/>
<dbReference type="PhylomeDB" id="Q8G5X3"/>
<dbReference type="UniPathway" id="UPA00053">
    <property type="reaction ID" value="UER00090"/>
</dbReference>
<dbReference type="Proteomes" id="UP000000439">
    <property type="component" value="Chromosome"/>
</dbReference>
<dbReference type="GO" id="GO:0005829">
    <property type="term" value="C:cytosol"/>
    <property type="evidence" value="ECO:0007669"/>
    <property type="project" value="TreeGrafter"/>
</dbReference>
<dbReference type="GO" id="GO:0004107">
    <property type="term" value="F:chorismate synthase activity"/>
    <property type="evidence" value="ECO:0007669"/>
    <property type="project" value="UniProtKB-UniRule"/>
</dbReference>
<dbReference type="GO" id="GO:0010181">
    <property type="term" value="F:FMN binding"/>
    <property type="evidence" value="ECO:0007669"/>
    <property type="project" value="TreeGrafter"/>
</dbReference>
<dbReference type="GO" id="GO:0008652">
    <property type="term" value="P:amino acid biosynthetic process"/>
    <property type="evidence" value="ECO:0007669"/>
    <property type="project" value="UniProtKB-KW"/>
</dbReference>
<dbReference type="GO" id="GO:0009073">
    <property type="term" value="P:aromatic amino acid family biosynthetic process"/>
    <property type="evidence" value="ECO:0007669"/>
    <property type="project" value="UniProtKB-KW"/>
</dbReference>
<dbReference type="GO" id="GO:0009423">
    <property type="term" value="P:chorismate biosynthetic process"/>
    <property type="evidence" value="ECO:0007669"/>
    <property type="project" value="UniProtKB-UniRule"/>
</dbReference>
<dbReference type="CDD" id="cd07304">
    <property type="entry name" value="Chorismate_synthase"/>
    <property type="match status" value="1"/>
</dbReference>
<dbReference type="FunFam" id="3.60.150.10:FF:000002">
    <property type="entry name" value="Chorismate synthase"/>
    <property type="match status" value="1"/>
</dbReference>
<dbReference type="Gene3D" id="3.60.150.10">
    <property type="entry name" value="Chorismate synthase AroC"/>
    <property type="match status" value="1"/>
</dbReference>
<dbReference type="HAMAP" id="MF_00300">
    <property type="entry name" value="Chorismate_synth"/>
    <property type="match status" value="1"/>
</dbReference>
<dbReference type="InterPro" id="IPR000453">
    <property type="entry name" value="Chorismate_synth"/>
</dbReference>
<dbReference type="InterPro" id="IPR035904">
    <property type="entry name" value="Chorismate_synth_AroC_sf"/>
</dbReference>
<dbReference type="InterPro" id="IPR020541">
    <property type="entry name" value="Chorismate_synthase_CS"/>
</dbReference>
<dbReference type="NCBIfam" id="TIGR00033">
    <property type="entry name" value="aroC"/>
    <property type="match status" value="1"/>
</dbReference>
<dbReference type="NCBIfam" id="NF003793">
    <property type="entry name" value="PRK05382.1"/>
    <property type="match status" value="1"/>
</dbReference>
<dbReference type="PANTHER" id="PTHR21085">
    <property type="entry name" value="CHORISMATE SYNTHASE"/>
    <property type="match status" value="1"/>
</dbReference>
<dbReference type="PANTHER" id="PTHR21085:SF0">
    <property type="entry name" value="CHORISMATE SYNTHASE"/>
    <property type="match status" value="1"/>
</dbReference>
<dbReference type="Pfam" id="PF01264">
    <property type="entry name" value="Chorismate_synt"/>
    <property type="match status" value="1"/>
</dbReference>
<dbReference type="PIRSF" id="PIRSF001456">
    <property type="entry name" value="Chorismate_synth"/>
    <property type="match status" value="1"/>
</dbReference>
<dbReference type="SUPFAM" id="SSF103263">
    <property type="entry name" value="Chorismate synthase, AroC"/>
    <property type="match status" value="1"/>
</dbReference>
<dbReference type="PROSITE" id="PS00787">
    <property type="entry name" value="CHORISMATE_SYNTHASE_1"/>
    <property type="match status" value="1"/>
</dbReference>
<dbReference type="PROSITE" id="PS00789">
    <property type="entry name" value="CHORISMATE_SYNTHASE_3"/>
    <property type="match status" value="1"/>
</dbReference>
<organism>
    <name type="scientific">Bifidobacterium longum (strain NCC 2705)</name>
    <dbReference type="NCBI Taxonomy" id="206672"/>
    <lineage>
        <taxon>Bacteria</taxon>
        <taxon>Bacillati</taxon>
        <taxon>Actinomycetota</taxon>
        <taxon>Actinomycetes</taxon>
        <taxon>Bifidobacteriales</taxon>
        <taxon>Bifidobacteriaceae</taxon>
        <taxon>Bifidobacterium</taxon>
    </lineage>
</organism>
<comment type="function">
    <text evidence="1">Catalyzes the anti-1,4-elimination of the C-3 phosphate and the C-6 proR hydrogen from 5-enolpyruvylshikimate-3-phosphate (EPSP) to yield chorismate, which is the branch point compound that serves as the starting substrate for the three terminal pathways of aromatic amino acid biosynthesis. This reaction introduces a second double bond into the aromatic ring system.</text>
</comment>
<comment type="catalytic activity">
    <reaction evidence="1">
        <text>5-O-(1-carboxyvinyl)-3-phosphoshikimate = chorismate + phosphate</text>
        <dbReference type="Rhea" id="RHEA:21020"/>
        <dbReference type="ChEBI" id="CHEBI:29748"/>
        <dbReference type="ChEBI" id="CHEBI:43474"/>
        <dbReference type="ChEBI" id="CHEBI:57701"/>
        <dbReference type="EC" id="4.2.3.5"/>
    </reaction>
</comment>
<comment type="cofactor">
    <cofactor evidence="1">
        <name>FMNH2</name>
        <dbReference type="ChEBI" id="CHEBI:57618"/>
    </cofactor>
    <text evidence="1">Reduced FMN (FMNH(2)).</text>
</comment>
<comment type="pathway">
    <text evidence="1">Metabolic intermediate biosynthesis; chorismate biosynthesis; chorismate from D-erythrose 4-phosphate and phosphoenolpyruvate: step 7/7.</text>
</comment>
<comment type="subunit">
    <text evidence="1">Homotetramer.</text>
</comment>
<comment type="similarity">
    <text evidence="1">Belongs to the chorismate synthase family.</text>
</comment>
<reference key="1">
    <citation type="journal article" date="2002" name="Proc. Natl. Acad. Sci. U.S.A.">
        <title>The genome sequence of Bifidobacterium longum reflects its adaptation to the human gastrointestinal tract.</title>
        <authorList>
            <person name="Schell M.A."/>
            <person name="Karmirantzou M."/>
            <person name="Snel B."/>
            <person name="Vilanova D."/>
            <person name="Berger B."/>
            <person name="Pessi G."/>
            <person name="Zwahlen M.-C."/>
            <person name="Desiere F."/>
            <person name="Bork P."/>
            <person name="Delley M."/>
            <person name="Pridmore R.D."/>
            <person name="Arigoni F."/>
        </authorList>
    </citation>
    <scope>NUCLEOTIDE SEQUENCE [LARGE SCALE GENOMIC DNA]</scope>
    <source>
        <strain>NCC 2705</strain>
    </source>
</reference>